<dbReference type="EC" id="1.6.99.1" evidence="1"/>
<dbReference type="EMBL" id="AE017355">
    <property type="protein sequence ID" value="AAT63443.1"/>
    <property type="molecule type" value="Genomic_DNA"/>
</dbReference>
<dbReference type="RefSeq" id="WP_001083631.1">
    <property type="nucleotide sequence ID" value="NC_005957.1"/>
</dbReference>
<dbReference type="RefSeq" id="YP_036185.1">
    <property type="nucleotide sequence ID" value="NC_005957.1"/>
</dbReference>
<dbReference type="SMR" id="Q6HJU1"/>
<dbReference type="KEGG" id="btk:BT9727_1853"/>
<dbReference type="PATRIC" id="fig|281309.8.peg.1952"/>
<dbReference type="HOGENOM" id="CLU_012153_2_1_9"/>
<dbReference type="Proteomes" id="UP000001301">
    <property type="component" value="Chromosome"/>
</dbReference>
<dbReference type="GO" id="GO:0010181">
    <property type="term" value="F:FMN binding"/>
    <property type="evidence" value="ECO:0007669"/>
    <property type="project" value="UniProtKB-UniRule"/>
</dbReference>
<dbReference type="GO" id="GO:0050661">
    <property type="term" value="F:NADP binding"/>
    <property type="evidence" value="ECO:0007669"/>
    <property type="project" value="UniProtKB-UniRule"/>
</dbReference>
<dbReference type="GO" id="GO:0003959">
    <property type="term" value="F:NADPH dehydrogenase activity"/>
    <property type="evidence" value="ECO:0007669"/>
    <property type="project" value="UniProtKB-UniRule"/>
</dbReference>
<dbReference type="GO" id="GO:0009636">
    <property type="term" value="P:response to toxic substance"/>
    <property type="evidence" value="ECO:0007669"/>
    <property type="project" value="UniProtKB-KW"/>
</dbReference>
<dbReference type="CDD" id="cd02932">
    <property type="entry name" value="OYE_YqiM_FMN"/>
    <property type="match status" value="1"/>
</dbReference>
<dbReference type="Gene3D" id="3.20.20.70">
    <property type="entry name" value="Aldolase class I"/>
    <property type="match status" value="1"/>
</dbReference>
<dbReference type="HAMAP" id="MF_01614">
    <property type="entry name" value="NamA"/>
    <property type="match status" value="1"/>
</dbReference>
<dbReference type="InterPro" id="IPR013785">
    <property type="entry name" value="Aldolase_TIM"/>
</dbReference>
<dbReference type="InterPro" id="IPR023663">
    <property type="entry name" value="NADPH_DH_bac"/>
</dbReference>
<dbReference type="InterPro" id="IPR001155">
    <property type="entry name" value="OxRdtase_FMN_N"/>
</dbReference>
<dbReference type="InterPro" id="IPR044152">
    <property type="entry name" value="YqjM-like"/>
</dbReference>
<dbReference type="NCBIfam" id="NF010047">
    <property type="entry name" value="PRK13523.1"/>
    <property type="match status" value="1"/>
</dbReference>
<dbReference type="PANTHER" id="PTHR43303">
    <property type="entry name" value="NADPH DEHYDROGENASE C23G7.10C-RELATED"/>
    <property type="match status" value="1"/>
</dbReference>
<dbReference type="PANTHER" id="PTHR43303:SF4">
    <property type="entry name" value="NADPH DEHYDROGENASE C23G7.10C-RELATED"/>
    <property type="match status" value="1"/>
</dbReference>
<dbReference type="Pfam" id="PF00724">
    <property type="entry name" value="Oxidored_FMN"/>
    <property type="match status" value="1"/>
</dbReference>
<dbReference type="SUPFAM" id="SSF51395">
    <property type="entry name" value="FMN-linked oxidoreductases"/>
    <property type="match status" value="1"/>
</dbReference>
<proteinExistence type="inferred from homology"/>
<reference key="1">
    <citation type="journal article" date="2006" name="J. Bacteriol.">
        <title>Pathogenomic sequence analysis of Bacillus cereus and Bacillus thuringiensis isolates closely related to Bacillus anthracis.</title>
        <authorList>
            <person name="Han C.S."/>
            <person name="Xie G."/>
            <person name="Challacombe J.F."/>
            <person name="Altherr M.R."/>
            <person name="Bhotika S.S."/>
            <person name="Bruce D."/>
            <person name="Campbell C.S."/>
            <person name="Campbell M.L."/>
            <person name="Chen J."/>
            <person name="Chertkov O."/>
            <person name="Cleland C."/>
            <person name="Dimitrijevic M."/>
            <person name="Doggett N.A."/>
            <person name="Fawcett J.J."/>
            <person name="Glavina T."/>
            <person name="Goodwin L.A."/>
            <person name="Hill K.K."/>
            <person name="Hitchcock P."/>
            <person name="Jackson P.J."/>
            <person name="Keim P."/>
            <person name="Kewalramani A.R."/>
            <person name="Longmire J."/>
            <person name="Lucas S."/>
            <person name="Malfatti S."/>
            <person name="McMurry K."/>
            <person name="Meincke L.J."/>
            <person name="Misra M."/>
            <person name="Moseman B.L."/>
            <person name="Mundt M."/>
            <person name="Munk A.C."/>
            <person name="Okinaka R.T."/>
            <person name="Parson-Quintana B."/>
            <person name="Reilly L.P."/>
            <person name="Richardson P."/>
            <person name="Robinson D.L."/>
            <person name="Rubin E."/>
            <person name="Saunders E."/>
            <person name="Tapia R."/>
            <person name="Tesmer J.G."/>
            <person name="Thayer N."/>
            <person name="Thompson L.S."/>
            <person name="Tice H."/>
            <person name="Ticknor L.O."/>
            <person name="Wills P.L."/>
            <person name="Brettin T.S."/>
            <person name="Gilna P."/>
        </authorList>
    </citation>
    <scope>NUCLEOTIDE SEQUENCE [LARGE SCALE GENOMIC DNA]</scope>
    <source>
        <strain>97-27</strain>
    </source>
</reference>
<gene>
    <name evidence="1" type="primary">namA</name>
    <name type="ordered locus">BT9727_1853</name>
</gene>
<accession>Q6HJU1</accession>
<organism>
    <name type="scientific">Bacillus thuringiensis subsp. konkukian (strain 97-27)</name>
    <dbReference type="NCBI Taxonomy" id="281309"/>
    <lineage>
        <taxon>Bacteria</taxon>
        <taxon>Bacillati</taxon>
        <taxon>Bacillota</taxon>
        <taxon>Bacilli</taxon>
        <taxon>Bacillales</taxon>
        <taxon>Bacillaceae</taxon>
        <taxon>Bacillus</taxon>
        <taxon>Bacillus cereus group</taxon>
    </lineage>
</organism>
<name>NAMA_BACHK</name>
<keyword id="KW-0216">Detoxification</keyword>
<keyword id="KW-0285">Flavoprotein</keyword>
<keyword id="KW-0288">FMN</keyword>
<keyword id="KW-0521">NADP</keyword>
<keyword id="KW-0560">Oxidoreductase</keyword>
<sequence>MNSELFSPYTIKDVTLKNRIVMSPMCMYSSENEDGQVTNFHLIHYGTRAAGQVGLVMIEATAVLPEGRISNKDLGIWDDSLIEGLHKTTTFIHDNGAKAAIQLAHAGRKAELETDALAPSAIPFNETMKIPVEMSIQQIKNTILAFQQAAVRSKQAGFDVIEIHGAHGYLINEFLSPLSNKRTDEYGGSPEKRYRFLREIIDSINEVWNGPLFVRISANDYHPDGLTVQDYIQYTKWMKEQGVDLIDCSSGAVVPARIDVYPGYQVQYAKHIKEHANIATGAVGLITTGAQAEQILTNNEADLIFIGRELLRNPYFPRIAANELGFELEEPYQYERAPGKISTNK</sequence>
<feature type="chain" id="PRO_0000216117" description="NADPH dehydrogenase">
    <location>
        <begin position="1"/>
        <end position="345"/>
    </location>
</feature>
<feature type="binding site" evidence="1">
    <location>
        <begin position="23"/>
        <end position="26"/>
    </location>
    <ligand>
        <name>FMN</name>
        <dbReference type="ChEBI" id="CHEBI:58210"/>
    </ligand>
</feature>
<feature type="binding site" evidence="1">
    <location>
        <position position="28"/>
    </location>
    <ligand>
        <name>substrate</name>
    </ligand>
</feature>
<feature type="binding site" evidence="1">
    <location>
        <position position="60"/>
    </location>
    <ligand>
        <name>FMN</name>
        <dbReference type="ChEBI" id="CHEBI:58210"/>
    </ligand>
</feature>
<feature type="binding site" evidence="1">
    <location>
        <position position="102"/>
    </location>
    <ligand>
        <name>FMN</name>
        <dbReference type="ChEBI" id="CHEBI:58210"/>
    </ligand>
</feature>
<feature type="binding site" evidence="1">
    <location>
        <begin position="164"/>
        <end position="167"/>
    </location>
    <ligand>
        <name>substrate</name>
    </ligand>
</feature>
<feature type="binding site" evidence="1">
    <location>
        <position position="215"/>
    </location>
    <ligand>
        <name>FMN</name>
        <dbReference type="ChEBI" id="CHEBI:58210"/>
    </ligand>
</feature>
<feature type="binding site" evidence="1">
    <location>
        <begin position="307"/>
        <end position="308"/>
    </location>
    <ligand>
        <name>FMN</name>
        <dbReference type="ChEBI" id="CHEBI:58210"/>
    </ligand>
</feature>
<evidence type="ECO:0000255" key="1">
    <source>
        <dbReference type="HAMAP-Rule" id="MF_01614"/>
    </source>
</evidence>
<comment type="function">
    <text evidence="1">Catalyzes the reduction of the double bond of an array of alpha,beta-unsaturated aldehydes and ketones. It also reduces the nitro group of nitroester and nitroaromatic compounds. It could have a role in detoxification processes.</text>
</comment>
<comment type="catalytic activity">
    <reaction evidence="1">
        <text>A + NADPH + H(+) = AH2 + NADP(+)</text>
        <dbReference type="Rhea" id="RHEA:13149"/>
        <dbReference type="ChEBI" id="CHEBI:13193"/>
        <dbReference type="ChEBI" id="CHEBI:15378"/>
        <dbReference type="ChEBI" id="CHEBI:17499"/>
        <dbReference type="ChEBI" id="CHEBI:57783"/>
        <dbReference type="ChEBI" id="CHEBI:58349"/>
        <dbReference type="EC" id="1.6.99.1"/>
    </reaction>
</comment>
<comment type="cofactor">
    <cofactor evidence="1">
        <name>FMN</name>
        <dbReference type="ChEBI" id="CHEBI:58210"/>
    </cofactor>
</comment>
<comment type="subunit">
    <text evidence="1">Homotetramer.</text>
</comment>
<comment type="similarity">
    <text evidence="1">Belongs to the NADH:flavin oxidoreductase/NADH oxidase family. NamA subfamily.</text>
</comment>
<protein>
    <recommendedName>
        <fullName evidence="1">NADPH dehydrogenase</fullName>
        <ecNumber evidence="1">1.6.99.1</ecNumber>
    </recommendedName>
</protein>